<keyword id="KW-0687">Ribonucleoprotein</keyword>
<keyword id="KW-0689">Ribosomal protein</keyword>
<reference key="1">
    <citation type="journal article" date="2004" name="J. Infect. Dis.">
        <title>Progress toward characterization of the group A Streptococcus metagenome: complete genome sequence of a macrolide-resistant serotype M6 strain.</title>
        <authorList>
            <person name="Banks D.J."/>
            <person name="Porcella S.F."/>
            <person name="Barbian K.D."/>
            <person name="Beres S.B."/>
            <person name="Philips L.E."/>
            <person name="Voyich J.M."/>
            <person name="DeLeo F.R."/>
            <person name="Martin J.M."/>
            <person name="Somerville G.A."/>
            <person name="Musser J.M."/>
        </authorList>
    </citation>
    <scope>NUCLEOTIDE SEQUENCE [LARGE SCALE GENOMIC DNA]</scope>
    <source>
        <strain>ATCC BAA-946 / MGAS10394</strain>
    </source>
</reference>
<organism>
    <name type="scientific">Streptococcus pyogenes serotype M6 (strain ATCC BAA-946 / MGAS10394)</name>
    <dbReference type="NCBI Taxonomy" id="286636"/>
    <lineage>
        <taxon>Bacteria</taxon>
        <taxon>Bacillati</taxon>
        <taxon>Bacillota</taxon>
        <taxon>Bacilli</taxon>
        <taxon>Lactobacillales</taxon>
        <taxon>Streptococcaceae</taxon>
        <taxon>Streptococcus</taxon>
    </lineage>
</organism>
<gene>
    <name evidence="1" type="primary">rplS</name>
    <name type="ordered locus">M6_Spy0571</name>
</gene>
<name>RL19_STRP6</name>
<accession>Q5XD07</accession>
<protein>
    <recommendedName>
        <fullName evidence="1">Large ribosomal subunit protein bL19</fullName>
    </recommendedName>
    <alternativeName>
        <fullName evidence="2">50S ribosomal protein L19</fullName>
    </alternativeName>
</protein>
<comment type="function">
    <text evidence="1">This protein is located at the 30S-50S ribosomal subunit interface and may play a role in the structure and function of the aminoacyl-tRNA binding site.</text>
</comment>
<comment type="similarity">
    <text evidence="1">Belongs to the bacterial ribosomal protein bL19 family.</text>
</comment>
<feature type="chain" id="PRO_0000163546" description="Large ribosomal subunit protein bL19">
    <location>
        <begin position="1"/>
        <end position="115"/>
    </location>
</feature>
<proteinExistence type="inferred from homology"/>
<sequence>MNPLIQSLTEGQLRSDIPNFRPGDTVRVHAKVVEGTRERIQIFEGVVISRKGQGISEMYTVRKISGGIGVERTFPIHTPRVDKIEVIRHGKVRRAKLYYLRALQGKAARIKEIRR</sequence>
<dbReference type="EMBL" id="CP000003">
    <property type="protein sequence ID" value="AAT86706.1"/>
    <property type="molecule type" value="Genomic_DNA"/>
</dbReference>
<dbReference type="RefSeq" id="WP_002985298.1">
    <property type="nucleotide sequence ID" value="NC_006086.1"/>
</dbReference>
<dbReference type="SMR" id="Q5XD07"/>
<dbReference type="GeneID" id="69901140"/>
<dbReference type="KEGG" id="spa:M6_Spy0571"/>
<dbReference type="HOGENOM" id="CLU_103507_2_1_9"/>
<dbReference type="Proteomes" id="UP000001167">
    <property type="component" value="Chromosome"/>
</dbReference>
<dbReference type="GO" id="GO:0022625">
    <property type="term" value="C:cytosolic large ribosomal subunit"/>
    <property type="evidence" value="ECO:0007669"/>
    <property type="project" value="TreeGrafter"/>
</dbReference>
<dbReference type="GO" id="GO:0003735">
    <property type="term" value="F:structural constituent of ribosome"/>
    <property type="evidence" value="ECO:0007669"/>
    <property type="project" value="InterPro"/>
</dbReference>
<dbReference type="GO" id="GO:0006412">
    <property type="term" value="P:translation"/>
    <property type="evidence" value="ECO:0007669"/>
    <property type="project" value="UniProtKB-UniRule"/>
</dbReference>
<dbReference type="FunFam" id="2.30.30.790:FF:000001">
    <property type="entry name" value="50S ribosomal protein L19"/>
    <property type="match status" value="1"/>
</dbReference>
<dbReference type="Gene3D" id="2.30.30.790">
    <property type="match status" value="1"/>
</dbReference>
<dbReference type="HAMAP" id="MF_00402">
    <property type="entry name" value="Ribosomal_bL19"/>
    <property type="match status" value="1"/>
</dbReference>
<dbReference type="InterPro" id="IPR001857">
    <property type="entry name" value="Ribosomal_bL19"/>
</dbReference>
<dbReference type="InterPro" id="IPR018257">
    <property type="entry name" value="Ribosomal_bL19_CS"/>
</dbReference>
<dbReference type="InterPro" id="IPR038657">
    <property type="entry name" value="Ribosomal_bL19_sf"/>
</dbReference>
<dbReference type="InterPro" id="IPR008991">
    <property type="entry name" value="Translation_prot_SH3-like_sf"/>
</dbReference>
<dbReference type="NCBIfam" id="TIGR01024">
    <property type="entry name" value="rplS_bact"/>
    <property type="match status" value="1"/>
</dbReference>
<dbReference type="PANTHER" id="PTHR15680:SF9">
    <property type="entry name" value="LARGE RIBOSOMAL SUBUNIT PROTEIN BL19M"/>
    <property type="match status" value="1"/>
</dbReference>
<dbReference type="PANTHER" id="PTHR15680">
    <property type="entry name" value="RIBOSOMAL PROTEIN L19"/>
    <property type="match status" value="1"/>
</dbReference>
<dbReference type="Pfam" id="PF01245">
    <property type="entry name" value="Ribosomal_L19"/>
    <property type="match status" value="1"/>
</dbReference>
<dbReference type="PIRSF" id="PIRSF002191">
    <property type="entry name" value="Ribosomal_L19"/>
    <property type="match status" value="1"/>
</dbReference>
<dbReference type="PRINTS" id="PR00061">
    <property type="entry name" value="RIBOSOMALL19"/>
</dbReference>
<dbReference type="SUPFAM" id="SSF50104">
    <property type="entry name" value="Translation proteins SH3-like domain"/>
    <property type="match status" value="1"/>
</dbReference>
<dbReference type="PROSITE" id="PS01015">
    <property type="entry name" value="RIBOSOMAL_L19"/>
    <property type="match status" value="1"/>
</dbReference>
<evidence type="ECO:0000255" key="1">
    <source>
        <dbReference type="HAMAP-Rule" id="MF_00402"/>
    </source>
</evidence>
<evidence type="ECO:0000305" key="2"/>